<comment type="function">
    <text evidence="1">Located at the top of the head of the 30S subunit, it contacts several helices of the 16S rRNA. In the 70S ribosome it contacts the 23S rRNA (bridge B1a) and protein L5 of the 50S subunit (bridge B1b), connecting the 2 subunits; these bridges are implicated in subunit movement. Contacts the tRNAs in the A and P-sites.</text>
</comment>
<comment type="subunit">
    <text evidence="1">Part of the 30S ribosomal subunit. Forms a loose heterodimer with protein S19. Forms two bridges to the 50S subunit in the 70S ribosome.</text>
</comment>
<comment type="similarity">
    <text evidence="1">Belongs to the universal ribosomal protein uS13 family.</text>
</comment>
<gene>
    <name evidence="1" type="primary">rpsM</name>
    <name type="ordered locus">VC_2574</name>
</gene>
<protein>
    <recommendedName>
        <fullName evidence="1">Small ribosomal subunit protein uS13</fullName>
    </recommendedName>
    <alternativeName>
        <fullName evidence="3">30S ribosomal protein S13</fullName>
    </alternativeName>
</protein>
<feature type="chain" id="PRO_0000132166" description="Small ribosomal subunit protein uS13">
    <location>
        <begin position="1"/>
        <end position="118"/>
    </location>
</feature>
<feature type="region of interest" description="Disordered" evidence="2">
    <location>
        <begin position="94"/>
        <end position="118"/>
    </location>
</feature>
<proteinExistence type="inferred from homology"/>
<evidence type="ECO:0000255" key="1">
    <source>
        <dbReference type="HAMAP-Rule" id="MF_01315"/>
    </source>
</evidence>
<evidence type="ECO:0000256" key="2">
    <source>
        <dbReference type="SAM" id="MobiDB-lite"/>
    </source>
</evidence>
<evidence type="ECO:0000305" key="3"/>
<dbReference type="EMBL" id="AE003852">
    <property type="protein sequence ID" value="AAF95715.1"/>
    <property type="molecule type" value="Genomic_DNA"/>
</dbReference>
<dbReference type="PIR" id="D82061">
    <property type="entry name" value="D82061"/>
</dbReference>
<dbReference type="RefSeq" id="NP_232202.1">
    <property type="nucleotide sequence ID" value="NC_002505.1"/>
</dbReference>
<dbReference type="RefSeq" id="WP_000090771.1">
    <property type="nucleotide sequence ID" value="NZ_LT906614.1"/>
</dbReference>
<dbReference type="SMR" id="Q9KP05"/>
<dbReference type="STRING" id="243277.VC_2574"/>
<dbReference type="DNASU" id="2615591"/>
<dbReference type="EnsemblBacteria" id="AAF95715">
    <property type="protein sequence ID" value="AAF95715"/>
    <property type="gene ID" value="VC_2574"/>
</dbReference>
<dbReference type="GeneID" id="94012774"/>
<dbReference type="KEGG" id="vch:VC_2574"/>
<dbReference type="PATRIC" id="fig|243277.26.peg.2453"/>
<dbReference type="eggNOG" id="COG0099">
    <property type="taxonomic scope" value="Bacteria"/>
</dbReference>
<dbReference type="HOGENOM" id="CLU_103849_1_2_6"/>
<dbReference type="Proteomes" id="UP000000584">
    <property type="component" value="Chromosome 1"/>
</dbReference>
<dbReference type="GO" id="GO:0005829">
    <property type="term" value="C:cytosol"/>
    <property type="evidence" value="ECO:0000318"/>
    <property type="project" value="GO_Central"/>
</dbReference>
<dbReference type="GO" id="GO:0015935">
    <property type="term" value="C:small ribosomal subunit"/>
    <property type="evidence" value="ECO:0000318"/>
    <property type="project" value="GO_Central"/>
</dbReference>
<dbReference type="GO" id="GO:0019843">
    <property type="term" value="F:rRNA binding"/>
    <property type="evidence" value="ECO:0007669"/>
    <property type="project" value="UniProtKB-UniRule"/>
</dbReference>
<dbReference type="GO" id="GO:0003735">
    <property type="term" value="F:structural constituent of ribosome"/>
    <property type="evidence" value="ECO:0007669"/>
    <property type="project" value="InterPro"/>
</dbReference>
<dbReference type="GO" id="GO:0000049">
    <property type="term" value="F:tRNA binding"/>
    <property type="evidence" value="ECO:0007669"/>
    <property type="project" value="UniProtKB-UniRule"/>
</dbReference>
<dbReference type="GO" id="GO:0006412">
    <property type="term" value="P:translation"/>
    <property type="evidence" value="ECO:0007669"/>
    <property type="project" value="UniProtKB-UniRule"/>
</dbReference>
<dbReference type="FunFam" id="1.10.8.50:FF:000001">
    <property type="entry name" value="30S ribosomal protein S13"/>
    <property type="match status" value="1"/>
</dbReference>
<dbReference type="FunFam" id="4.10.910.10:FF:000001">
    <property type="entry name" value="30S ribosomal protein S13"/>
    <property type="match status" value="1"/>
</dbReference>
<dbReference type="Gene3D" id="1.10.8.50">
    <property type="match status" value="1"/>
</dbReference>
<dbReference type="Gene3D" id="4.10.910.10">
    <property type="entry name" value="30s ribosomal protein s13, domain 2"/>
    <property type="match status" value="1"/>
</dbReference>
<dbReference type="HAMAP" id="MF_01315">
    <property type="entry name" value="Ribosomal_uS13"/>
    <property type="match status" value="1"/>
</dbReference>
<dbReference type="InterPro" id="IPR027437">
    <property type="entry name" value="Rbsml_uS13_C"/>
</dbReference>
<dbReference type="InterPro" id="IPR001892">
    <property type="entry name" value="Ribosomal_uS13"/>
</dbReference>
<dbReference type="InterPro" id="IPR010979">
    <property type="entry name" value="Ribosomal_uS13-like_H2TH"/>
</dbReference>
<dbReference type="InterPro" id="IPR019980">
    <property type="entry name" value="Ribosomal_uS13_bac-type"/>
</dbReference>
<dbReference type="InterPro" id="IPR018269">
    <property type="entry name" value="Ribosomal_uS13_CS"/>
</dbReference>
<dbReference type="NCBIfam" id="TIGR03631">
    <property type="entry name" value="uS13_bact"/>
    <property type="match status" value="1"/>
</dbReference>
<dbReference type="PANTHER" id="PTHR10871">
    <property type="entry name" value="30S RIBOSOMAL PROTEIN S13/40S RIBOSOMAL PROTEIN S18"/>
    <property type="match status" value="1"/>
</dbReference>
<dbReference type="PANTHER" id="PTHR10871:SF1">
    <property type="entry name" value="SMALL RIBOSOMAL SUBUNIT PROTEIN US13M"/>
    <property type="match status" value="1"/>
</dbReference>
<dbReference type="Pfam" id="PF00416">
    <property type="entry name" value="Ribosomal_S13"/>
    <property type="match status" value="1"/>
</dbReference>
<dbReference type="PIRSF" id="PIRSF002134">
    <property type="entry name" value="Ribosomal_S13"/>
    <property type="match status" value="1"/>
</dbReference>
<dbReference type="SUPFAM" id="SSF46946">
    <property type="entry name" value="S13-like H2TH domain"/>
    <property type="match status" value="1"/>
</dbReference>
<dbReference type="PROSITE" id="PS00646">
    <property type="entry name" value="RIBOSOMAL_S13_1"/>
    <property type="match status" value="1"/>
</dbReference>
<dbReference type="PROSITE" id="PS50159">
    <property type="entry name" value="RIBOSOMAL_S13_2"/>
    <property type="match status" value="1"/>
</dbReference>
<organism>
    <name type="scientific">Vibrio cholerae serotype O1 (strain ATCC 39315 / El Tor Inaba N16961)</name>
    <dbReference type="NCBI Taxonomy" id="243277"/>
    <lineage>
        <taxon>Bacteria</taxon>
        <taxon>Pseudomonadati</taxon>
        <taxon>Pseudomonadota</taxon>
        <taxon>Gammaproteobacteria</taxon>
        <taxon>Vibrionales</taxon>
        <taxon>Vibrionaceae</taxon>
        <taxon>Vibrio</taxon>
    </lineage>
</organism>
<sequence length="118" mass="13272">MARIAGINIPDHKHAVIALTAIYGIGKTRSKAILADLGIAESVKISELTEEQIDQLRDGVAKYTVEGDLRREVSMNIKRLMDLGCYRGLRHRRSLPLRGQRTKTNARTRKGPRKPIKK</sequence>
<name>RS13_VIBCH</name>
<keyword id="KW-1185">Reference proteome</keyword>
<keyword id="KW-0687">Ribonucleoprotein</keyword>
<keyword id="KW-0689">Ribosomal protein</keyword>
<keyword id="KW-0694">RNA-binding</keyword>
<keyword id="KW-0699">rRNA-binding</keyword>
<keyword id="KW-0820">tRNA-binding</keyword>
<accession>Q9KP05</accession>
<reference key="1">
    <citation type="journal article" date="2000" name="Nature">
        <title>DNA sequence of both chromosomes of the cholera pathogen Vibrio cholerae.</title>
        <authorList>
            <person name="Heidelberg J.F."/>
            <person name="Eisen J.A."/>
            <person name="Nelson W.C."/>
            <person name="Clayton R.A."/>
            <person name="Gwinn M.L."/>
            <person name="Dodson R.J."/>
            <person name="Haft D.H."/>
            <person name="Hickey E.K."/>
            <person name="Peterson J.D."/>
            <person name="Umayam L.A."/>
            <person name="Gill S.R."/>
            <person name="Nelson K.E."/>
            <person name="Read T.D."/>
            <person name="Tettelin H."/>
            <person name="Richardson D.L."/>
            <person name="Ermolaeva M.D."/>
            <person name="Vamathevan J.J."/>
            <person name="Bass S."/>
            <person name="Qin H."/>
            <person name="Dragoi I."/>
            <person name="Sellers P."/>
            <person name="McDonald L.A."/>
            <person name="Utterback T.R."/>
            <person name="Fleischmann R.D."/>
            <person name="Nierman W.C."/>
            <person name="White O."/>
            <person name="Salzberg S.L."/>
            <person name="Smith H.O."/>
            <person name="Colwell R.R."/>
            <person name="Mekalanos J.J."/>
            <person name="Venter J.C."/>
            <person name="Fraser C.M."/>
        </authorList>
    </citation>
    <scope>NUCLEOTIDE SEQUENCE [LARGE SCALE GENOMIC DNA]</scope>
    <source>
        <strain>ATCC 39315 / El Tor Inaba N16961</strain>
    </source>
</reference>